<sequence>MALLQIAEPGQSAAPHQHKRAVGIDLGTTNSLVAAVRSGQADTLCDEQGRDLLPSVVHYQADTIRVGVDAKREAALDPHNTIVSAKRMMGKALADIDTRQQPYQFVAADNGMPQLQTRQGLVNPVQVSAEILKKLAERGAAALGGDLDGVVITVPAYFDDAQRQGTKDAARLAGLHVLRLLNEPTAAAIAYGLDSGQEGVIAVYDLGGGTFDISILRLHRGVFEVMATGGDSALGGDDFDHLLADWLKEQAGLTGELDARLQRELLDVAAAVKHGLTDADAVPCTFAGWQGSVTRSQFDELIQPLVKRTLLACRRALRDAGLEQEEVLEVVMVGGSTRVPLVRELVGEFFQRPPLTSIDPDKVVAIGAAIQADILVGNKPDAEMLLLDVIPLSLGLETMGGLAEKVIPRNTTIPVARAQEFTTFKDGQTAMAIHVVQGERELVADCRSLARFTLTGIPPMVAGAAHIRVTFQVDADGLLSVSAMEKSSGVQAEIQVKPSYGLGEDDILNMLSASIANAQQDMDARMLAEQQVEADRVVESLNAALAADGEALLSPAERAELDAAIAHLLTMRSTGTTNQIKEAIEAADAASGEFAARRMDASIRKVLTGQNVNKV</sequence>
<gene>
    <name evidence="1" type="primary">hscA</name>
    <name type="ordered locus">AHA_1751</name>
</gene>
<accession>A0KJ36</accession>
<keyword id="KW-0067">ATP-binding</keyword>
<keyword id="KW-0143">Chaperone</keyword>
<keyword id="KW-0547">Nucleotide-binding</keyword>
<keyword id="KW-1185">Reference proteome</keyword>
<feature type="chain" id="PRO_1000044840" description="Chaperone protein HscA homolog">
    <location>
        <begin position="1"/>
        <end position="615"/>
    </location>
</feature>
<protein>
    <recommendedName>
        <fullName evidence="1">Chaperone protein HscA homolog</fullName>
    </recommendedName>
</protein>
<proteinExistence type="inferred from homology"/>
<evidence type="ECO:0000255" key="1">
    <source>
        <dbReference type="HAMAP-Rule" id="MF_00679"/>
    </source>
</evidence>
<name>HSCA_AERHH</name>
<dbReference type="EMBL" id="CP000462">
    <property type="protein sequence ID" value="ABK37680.1"/>
    <property type="molecule type" value="Genomic_DNA"/>
</dbReference>
<dbReference type="RefSeq" id="WP_011705638.1">
    <property type="nucleotide sequence ID" value="NC_008570.1"/>
</dbReference>
<dbReference type="RefSeq" id="YP_856287.1">
    <property type="nucleotide sequence ID" value="NC_008570.1"/>
</dbReference>
<dbReference type="SMR" id="A0KJ36"/>
<dbReference type="STRING" id="380703.AHA_1751"/>
<dbReference type="EnsemblBacteria" id="ABK37680">
    <property type="protein sequence ID" value="ABK37680"/>
    <property type="gene ID" value="AHA_1751"/>
</dbReference>
<dbReference type="GeneID" id="4490281"/>
<dbReference type="KEGG" id="aha:AHA_1751"/>
<dbReference type="PATRIC" id="fig|380703.7.peg.1765"/>
<dbReference type="eggNOG" id="COG0443">
    <property type="taxonomic scope" value="Bacteria"/>
</dbReference>
<dbReference type="HOGENOM" id="CLU_005965_2_1_6"/>
<dbReference type="OrthoDB" id="9766019at2"/>
<dbReference type="Proteomes" id="UP000000756">
    <property type="component" value="Chromosome"/>
</dbReference>
<dbReference type="GO" id="GO:0005524">
    <property type="term" value="F:ATP binding"/>
    <property type="evidence" value="ECO:0007669"/>
    <property type="project" value="UniProtKB-KW"/>
</dbReference>
<dbReference type="GO" id="GO:0016887">
    <property type="term" value="F:ATP hydrolysis activity"/>
    <property type="evidence" value="ECO:0007669"/>
    <property type="project" value="UniProtKB-UniRule"/>
</dbReference>
<dbReference type="GO" id="GO:0140662">
    <property type="term" value="F:ATP-dependent protein folding chaperone"/>
    <property type="evidence" value="ECO:0007669"/>
    <property type="project" value="InterPro"/>
</dbReference>
<dbReference type="GO" id="GO:0051082">
    <property type="term" value="F:unfolded protein binding"/>
    <property type="evidence" value="ECO:0007669"/>
    <property type="project" value="InterPro"/>
</dbReference>
<dbReference type="GO" id="GO:0016226">
    <property type="term" value="P:iron-sulfur cluster assembly"/>
    <property type="evidence" value="ECO:0007669"/>
    <property type="project" value="InterPro"/>
</dbReference>
<dbReference type="CDD" id="cd10236">
    <property type="entry name" value="ASKHA_NBD_HSP70_HscA"/>
    <property type="match status" value="1"/>
</dbReference>
<dbReference type="FunFam" id="3.30.420.40:FF:000046">
    <property type="entry name" value="Chaperone protein HscA"/>
    <property type="match status" value="1"/>
</dbReference>
<dbReference type="FunFam" id="2.60.34.10:FF:000005">
    <property type="entry name" value="Chaperone protein HscA homolog"/>
    <property type="match status" value="1"/>
</dbReference>
<dbReference type="Gene3D" id="1.20.1270.10">
    <property type="match status" value="1"/>
</dbReference>
<dbReference type="Gene3D" id="3.30.420.40">
    <property type="match status" value="2"/>
</dbReference>
<dbReference type="Gene3D" id="3.90.640.10">
    <property type="entry name" value="Actin, Chain A, domain 4"/>
    <property type="match status" value="1"/>
</dbReference>
<dbReference type="Gene3D" id="2.60.34.10">
    <property type="entry name" value="Substrate Binding Domain Of DNAk, Chain A, domain 1"/>
    <property type="match status" value="1"/>
</dbReference>
<dbReference type="HAMAP" id="MF_00679">
    <property type="entry name" value="HscA"/>
    <property type="match status" value="1"/>
</dbReference>
<dbReference type="InterPro" id="IPR043129">
    <property type="entry name" value="ATPase_NBD"/>
</dbReference>
<dbReference type="InterPro" id="IPR018181">
    <property type="entry name" value="Heat_shock_70_CS"/>
</dbReference>
<dbReference type="InterPro" id="IPR042039">
    <property type="entry name" value="HscA_NBD"/>
</dbReference>
<dbReference type="InterPro" id="IPR029048">
    <property type="entry name" value="HSP70_C_sf"/>
</dbReference>
<dbReference type="InterPro" id="IPR029047">
    <property type="entry name" value="HSP70_peptide-bd_sf"/>
</dbReference>
<dbReference type="InterPro" id="IPR013126">
    <property type="entry name" value="Hsp_70_fam"/>
</dbReference>
<dbReference type="InterPro" id="IPR010236">
    <property type="entry name" value="ISC_FeS_clus_asmbl_HscA"/>
</dbReference>
<dbReference type="NCBIfam" id="TIGR01991">
    <property type="entry name" value="HscA"/>
    <property type="match status" value="1"/>
</dbReference>
<dbReference type="NCBIfam" id="NF003520">
    <property type="entry name" value="PRK05183.1"/>
    <property type="match status" value="1"/>
</dbReference>
<dbReference type="PANTHER" id="PTHR19375">
    <property type="entry name" value="HEAT SHOCK PROTEIN 70KDA"/>
    <property type="match status" value="1"/>
</dbReference>
<dbReference type="Pfam" id="PF00012">
    <property type="entry name" value="HSP70"/>
    <property type="match status" value="1"/>
</dbReference>
<dbReference type="PRINTS" id="PR00301">
    <property type="entry name" value="HEATSHOCK70"/>
</dbReference>
<dbReference type="SUPFAM" id="SSF53067">
    <property type="entry name" value="Actin-like ATPase domain"/>
    <property type="match status" value="2"/>
</dbReference>
<dbReference type="SUPFAM" id="SSF100934">
    <property type="entry name" value="Heat shock protein 70kD (HSP70), C-terminal subdomain"/>
    <property type="match status" value="1"/>
</dbReference>
<dbReference type="SUPFAM" id="SSF100920">
    <property type="entry name" value="Heat shock protein 70kD (HSP70), peptide-binding domain"/>
    <property type="match status" value="1"/>
</dbReference>
<dbReference type="PROSITE" id="PS00297">
    <property type="entry name" value="HSP70_1"/>
    <property type="match status" value="1"/>
</dbReference>
<dbReference type="PROSITE" id="PS00329">
    <property type="entry name" value="HSP70_2"/>
    <property type="match status" value="1"/>
</dbReference>
<dbReference type="PROSITE" id="PS01036">
    <property type="entry name" value="HSP70_3"/>
    <property type="match status" value="1"/>
</dbReference>
<organism>
    <name type="scientific">Aeromonas hydrophila subsp. hydrophila (strain ATCC 7966 / DSM 30187 / BCRC 13018 / CCUG 14551 / JCM 1027 / KCTC 2358 / NCIMB 9240 / NCTC 8049)</name>
    <dbReference type="NCBI Taxonomy" id="380703"/>
    <lineage>
        <taxon>Bacteria</taxon>
        <taxon>Pseudomonadati</taxon>
        <taxon>Pseudomonadota</taxon>
        <taxon>Gammaproteobacteria</taxon>
        <taxon>Aeromonadales</taxon>
        <taxon>Aeromonadaceae</taxon>
        <taxon>Aeromonas</taxon>
    </lineage>
</organism>
<comment type="function">
    <text evidence="1">Chaperone involved in the maturation of iron-sulfur cluster-containing proteins. Has a low intrinsic ATPase activity which is markedly stimulated by HscB.</text>
</comment>
<comment type="similarity">
    <text evidence="1">Belongs to the heat shock protein 70 family.</text>
</comment>
<reference key="1">
    <citation type="journal article" date="2006" name="J. Bacteriol.">
        <title>Genome sequence of Aeromonas hydrophila ATCC 7966T: jack of all trades.</title>
        <authorList>
            <person name="Seshadri R."/>
            <person name="Joseph S.W."/>
            <person name="Chopra A.K."/>
            <person name="Sha J."/>
            <person name="Shaw J."/>
            <person name="Graf J."/>
            <person name="Haft D.H."/>
            <person name="Wu M."/>
            <person name="Ren Q."/>
            <person name="Rosovitz M.J."/>
            <person name="Madupu R."/>
            <person name="Tallon L."/>
            <person name="Kim M."/>
            <person name="Jin S."/>
            <person name="Vuong H."/>
            <person name="Stine O.C."/>
            <person name="Ali A."/>
            <person name="Horneman A.J."/>
            <person name="Heidelberg J.F."/>
        </authorList>
    </citation>
    <scope>NUCLEOTIDE SEQUENCE [LARGE SCALE GENOMIC DNA]</scope>
    <source>
        <strain>ATCC 7966 / DSM 30187 / BCRC 13018 / CCUG 14551 / JCM 1027 / KCTC 2358 / NCIMB 9240 / NCTC 8049</strain>
    </source>
</reference>